<protein>
    <recommendedName>
        <fullName evidence="1">Uracil phosphoribosyltransferase</fullName>
        <ecNumber evidence="1">2.4.2.9</ecNumber>
    </recommendedName>
    <alternativeName>
        <fullName evidence="1">UMP pyrophosphorylase</fullName>
    </alternativeName>
    <alternativeName>
        <fullName evidence="1">UPRTase</fullName>
    </alternativeName>
</protein>
<accession>B0R7K0</accession>
<proteinExistence type="inferred from homology"/>
<gene>
    <name evidence="1" type="primary">upp</name>
    <name type="ordered locus">OE_4234R</name>
</gene>
<sequence>MTIEDRGDAHVITHSLAKHTLSRLRDTTTEQVSFRKGLVKLGRISGYEIIDGAMETEFTAFETPLTETTGERVTGLDDVVIINVLRAATPFVEGLLKAFPRAKQGVISAGRDEDAGMDADGEFPITVDYVKLPDISEGDTVIVADPMLATGSTMCTVLDHVTDEMPAAGVEDLFVLSAVSAPDGLLRVGDQFPDADLLTVAIDDTLTDDGYIVPGLGDAGDRAFRTT</sequence>
<keyword id="KW-0021">Allosteric enzyme</keyword>
<keyword id="KW-0328">Glycosyltransferase</keyword>
<keyword id="KW-0342">GTP-binding</keyword>
<keyword id="KW-0460">Magnesium</keyword>
<keyword id="KW-0547">Nucleotide-binding</keyword>
<keyword id="KW-0808">Transferase</keyword>
<dbReference type="EC" id="2.4.2.9" evidence="1"/>
<dbReference type="EMBL" id="AM774415">
    <property type="protein sequence ID" value="CAP14719.1"/>
    <property type="molecule type" value="Genomic_DNA"/>
</dbReference>
<dbReference type="RefSeq" id="WP_010903718.1">
    <property type="nucleotide sequence ID" value="NC_010364.1"/>
</dbReference>
<dbReference type="SMR" id="B0R7K0"/>
<dbReference type="EnsemblBacteria" id="CAP14719">
    <property type="protein sequence ID" value="CAP14719"/>
    <property type="gene ID" value="OE_4234R"/>
</dbReference>
<dbReference type="GeneID" id="89348337"/>
<dbReference type="KEGG" id="hsl:OE_4234R"/>
<dbReference type="HOGENOM" id="CLU_067096_2_0_2"/>
<dbReference type="PhylomeDB" id="B0R7K0"/>
<dbReference type="UniPathway" id="UPA00574">
    <property type="reaction ID" value="UER00636"/>
</dbReference>
<dbReference type="Proteomes" id="UP000001321">
    <property type="component" value="Chromosome"/>
</dbReference>
<dbReference type="GO" id="GO:0005525">
    <property type="term" value="F:GTP binding"/>
    <property type="evidence" value="ECO:0007669"/>
    <property type="project" value="UniProtKB-KW"/>
</dbReference>
<dbReference type="GO" id="GO:0000287">
    <property type="term" value="F:magnesium ion binding"/>
    <property type="evidence" value="ECO:0007669"/>
    <property type="project" value="UniProtKB-UniRule"/>
</dbReference>
<dbReference type="GO" id="GO:0004845">
    <property type="term" value="F:uracil phosphoribosyltransferase activity"/>
    <property type="evidence" value="ECO:0007669"/>
    <property type="project" value="UniProtKB-UniRule"/>
</dbReference>
<dbReference type="GO" id="GO:0044206">
    <property type="term" value="P:UMP salvage"/>
    <property type="evidence" value="ECO:0007669"/>
    <property type="project" value="UniProtKB-UniRule"/>
</dbReference>
<dbReference type="GO" id="GO:0006223">
    <property type="term" value="P:uracil salvage"/>
    <property type="evidence" value="ECO:0007669"/>
    <property type="project" value="InterPro"/>
</dbReference>
<dbReference type="CDD" id="cd06223">
    <property type="entry name" value="PRTases_typeI"/>
    <property type="match status" value="1"/>
</dbReference>
<dbReference type="Gene3D" id="3.40.50.2020">
    <property type="match status" value="1"/>
</dbReference>
<dbReference type="HAMAP" id="MF_01218_A">
    <property type="entry name" value="Upp_A"/>
    <property type="match status" value="1"/>
</dbReference>
<dbReference type="InterPro" id="IPR000836">
    <property type="entry name" value="PRibTrfase_dom"/>
</dbReference>
<dbReference type="InterPro" id="IPR029057">
    <property type="entry name" value="PRTase-like"/>
</dbReference>
<dbReference type="InterPro" id="IPR034331">
    <property type="entry name" value="Upp_A"/>
</dbReference>
<dbReference type="InterPro" id="IPR005765">
    <property type="entry name" value="Ura_phspho_trans"/>
</dbReference>
<dbReference type="NCBIfam" id="NF001097">
    <property type="entry name" value="PRK00129.1"/>
    <property type="match status" value="1"/>
</dbReference>
<dbReference type="NCBIfam" id="TIGR01091">
    <property type="entry name" value="upp"/>
    <property type="match status" value="1"/>
</dbReference>
<dbReference type="Pfam" id="PF14681">
    <property type="entry name" value="UPRTase"/>
    <property type="match status" value="1"/>
</dbReference>
<dbReference type="SUPFAM" id="SSF53271">
    <property type="entry name" value="PRTase-like"/>
    <property type="match status" value="1"/>
</dbReference>
<name>UPP_HALS3</name>
<feature type="chain" id="PRO_1000139132" description="Uracil phosphoribosyltransferase">
    <location>
        <begin position="1"/>
        <end position="227"/>
    </location>
</feature>
<feature type="binding site" evidence="1">
    <location>
        <begin position="36"/>
        <end position="40"/>
    </location>
    <ligand>
        <name>GTP</name>
        <dbReference type="ChEBI" id="CHEBI:37565"/>
    </ligand>
</feature>
<feature type="binding site" evidence="1">
    <location>
        <position position="86"/>
    </location>
    <ligand>
        <name>5-phospho-alpha-D-ribose 1-diphosphate</name>
        <dbReference type="ChEBI" id="CHEBI:58017"/>
    </ligand>
</feature>
<feature type="binding site" evidence="1">
    <location>
        <position position="111"/>
    </location>
    <ligand>
        <name>5-phospho-alpha-D-ribose 1-diphosphate</name>
        <dbReference type="ChEBI" id="CHEBI:58017"/>
    </ligand>
</feature>
<feature type="binding site" evidence="1">
    <location>
        <begin position="145"/>
        <end position="153"/>
    </location>
    <ligand>
        <name>5-phospho-alpha-D-ribose 1-diphosphate</name>
        <dbReference type="ChEBI" id="CHEBI:58017"/>
    </ligand>
</feature>
<feature type="binding site" evidence="1">
    <location>
        <position position="212"/>
    </location>
    <ligand>
        <name>uracil</name>
        <dbReference type="ChEBI" id="CHEBI:17568"/>
    </ligand>
</feature>
<feature type="binding site" evidence="1">
    <location>
        <begin position="217"/>
        <end position="219"/>
    </location>
    <ligand>
        <name>uracil</name>
        <dbReference type="ChEBI" id="CHEBI:17568"/>
    </ligand>
</feature>
<feature type="binding site" evidence="1">
    <location>
        <position position="218"/>
    </location>
    <ligand>
        <name>5-phospho-alpha-D-ribose 1-diphosphate</name>
        <dbReference type="ChEBI" id="CHEBI:58017"/>
    </ligand>
</feature>
<organism>
    <name type="scientific">Halobacterium salinarum (strain ATCC 29341 / DSM 671 / R1)</name>
    <dbReference type="NCBI Taxonomy" id="478009"/>
    <lineage>
        <taxon>Archaea</taxon>
        <taxon>Methanobacteriati</taxon>
        <taxon>Methanobacteriota</taxon>
        <taxon>Stenosarchaea group</taxon>
        <taxon>Halobacteria</taxon>
        <taxon>Halobacteriales</taxon>
        <taxon>Halobacteriaceae</taxon>
        <taxon>Halobacterium</taxon>
        <taxon>Halobacterium salinarum NRC-34001</taxon>
    </lineage>
</organism>
<comment type="function">
    <text evidence="1">Catalyzes the conversion of uracil and 5-phospho-alpha-D-ribose 1-diphosphate (PRPP) to UMP and diphosphate.</text>
</comment>
<comment type="catalytic activity">
    <reaction evidence="1">
        <text>UMP + diphosphate = 5-phospho-alpha-D-ribose 1-diphosphate + uracil</text>
        <dbReference type="Rhea" id="RHEA:13017"/>
        <dbReference type="ChEBI" id="CHEBI:17568"/>
        <dbReference type="ChEBI" id="CHEBI:33019"/>
        <dbReference type="ChEBI" id="CHEBI:57865"/>
        <dbReference type="ChEBI" id="CHEBI:58017"/>
        <dbReference type="EC" id="2.4.2.9"/>
    </reaction>
</comment>
<comment type="cofactor">
    <cofactor evidence="1">
        <name>Mg(2+)</name>
        <dbReference type="ChEBI" id="CHEBI:18420"/>
    </cofactor>
    <text evidence="1">Binds 1 Mg(2+) ion per subunit. The magnesium is bound as Mg-PRPP.</text>
</comment>
<comment type="activity regulation">
    <text evidence="1">Allosterically activated by GTP.</text>
</comment>
<comment type="pathway">
    <text evidence="1">Pyrimidine metabolism; UMP biosynthesis via salvage pathway; UMP from uracil: step 1/1.</text>
</comment>
<comment type="similarity">
    <text evidence="1">Belongs to the UPRTase family.</text>
</comment>
<reference key="1">
    <citation type="journal article" date="2008" name="Genomics">
        <title>Evolution in the laboratory: the genome of Halobacterium salinarum strain R1 compared to that of strain NRC-1.</title>
        <authorList>
            <person name="Pfeiffer F."/>
            <person name="Schuster S.C."/>
            <person name="Broicher A."/>
            <person name="Falb M."/>
            <person name="Palm P."/>
            <person name="Rodewald K."/>
            <person name="Ruepp A."/>
            <person name="Soppa J."/>
            <person name="Tittor J."/>
            <person name="Oesterhelt D."/>
        </authorList>
    </citation>
    <scope>NUCLEOTIDE SEQUENCE [LARGE SCALE GENOMIC DNA]</scope>
    <source>
        <strain>ATCC 29341 / DSM 671 / R1</strain>
    </source>
</reference>
<evidence type="ECO:0000255" key="1">
    <source>
        <dbReference type="HAMAP-Rule" id="MF_01218"/>
    </source>
</evidence>